<gene>
    <name evidence="9" type="primary">cm3A</name>
    <name type="ORF">CCM_01285</name>
</gene>
<accession>G3J456</accession>
<protein>
    <recommendedName>
        <fullName evidence="9">Nonribosomal peptide synthetase cm3A</fullName>
        <ecNumber evidence="11">6.3.2.-</ecNumber>
    </recommendedName>
    <alternativeName>
        <fullName evidence="9">Beauveriolides biosynthesis cluster protein A</fullName>
    </alternativeName>
    <alternativeName>
        <fullName evidence="9">Cyclodepsipeptides cm3 biosynthesis cluster protein A</fullName>
    </alternativeName>
</protein>
<proteinExistence type="evidence at protein level"/>
<dbReference type="EC" id="6.3.2.-" evidence="11"/>
<dbReference type="EMBL" id="JH126399">
    <property type="protein sequence ID" value="EGX96627.1"/>
    <property type="molecule type" value="Genomic_DNA"/>
</dbReference>
<dbReference type="RefSeq" id="XP_006666504.1">
    <property type="nucleotide sequence ID" value="XM_006666441.1"/>
</dbReference>
<dbReference type="SMR" id="G3J456"/>
<dbReference type="STRING" id="983644.G3J456"/>
<dbReference type="GeneID" id="18163316"/>
<dbReference type="KEGG" id="cmt:CCM_01285"/>
<dbReference type="VEuPathDB" id="FungiDB:CCM_01285"/>
<dbReference type="eggNOG" id="KOG1178">
    <property type="taxonomic scope" value="Eukaryota"/>
</dbReference>
<dbReference type="HOGENOM" id="CLU_000022_60_0_1"/>
<dbReference type="InParanoid" id="G3J456"/>
<dbReference type="OMA" id="CQFEYST"/>
<dbReference type="OrthoDB" id="416786at2759"/>
<dbReference type="Proteomes" id="UP000001610">
    <property type="component" value="Unassembled WGS sequence"/>
</dbReference>
<dbReference type="GO" id="GO:0005737">
    <property type="term" value="C:cytoplasm"/>
    <property type="evidence" value="ECO:0007669"/>
    <property type="project" value="TreeGrafter"/>
</dbReference>
<dbReference type="GO" id="GO:0016874">
    <property type="term" value="F:ligase activity"/>
    <property type="evidence" value="ECO:0007669"/>
    <property type="project" value="UniProtKB-KW"/>
</dbReference>
<dbReference type="GO" id="GO:0031177">
    <property type="term" value="F:phosphopantetheine binding"/>
    <property type="evidence" value="ECO:0007669"/>
    <property type="project" value="InterPro"/>
</dbReference>
<dbReference type="GO" id="GO:0043041">
    <property type="term" value="P:amino acid activation for nonribosomal peptide biosynthetic process"/>
    <property type="evidence" value="ECO:0007669"/>
    <property type="project" value="TreeGrafter"/>
</dbReference>
<dbReference type="GO" id="GO:0044550">
    <property type="term" value="P:secondary metabolite biosynthetic process"/>
    <property type="evidence" value="ECO:0007669"/>
    <property type="project" value="TreeGrafter"/>
</dbReference>
<dbReference type="CDD" id="cd05918">
    <property type="entry name" value="A_NRPS_SidN3_like"/>
    <property type="match status" value="3"/>
</dbReference>
<dbReference type="CDD" id="cd19542">
    <property type="entry name" value="CT_NRPS-like"/>
    <property type="match status" value="3"/>
</dbReference>
<dbReference type="CDD" id="cd19534">
    <property type="entry name" value="E_NRPS"/>
    <property type="match status" value="1"/>
</dbReference>
<dbReference type="CDD" id="cd19545">
    <property type="entry name" value="FUM14_C_NRPS-like"/>
    <property type="match status" value="1"/>
</dbReference>
<dbReference type="FunFam" id="3.30.559.10:FF:000016">
    <property type="entry name" value="Nonribosomal peptide synthase Pes1"/>
    <property type="match status" value="1"/>
</dbReference>
<dbReference type="FunFam" id="3.30.559.30:FF:000002">
    <property type="entry name" value="Nonribosomal peptide synthase Pes1"/>
    <property type="match status" value="1"/>
</dbReference>
<dbReference type="FunFam" id="3.30.300.30:FF:000015">
    <property type="entry name" value="Nonribosomal peptide synthase SidD"/>
    <property type="match status" value="3"/>
</dbReference>
<dbReference type="FunFam" id="1.10.1200.10:FF:000005">
    <property type="entry name" value="Nonribosomal peptide synthetase 1"/>
    <property type="match status" value="1"/>
</dbReference>
<dbReference type="FunFam" id="3.40.50.12780:FF:000014">
    <property type="entry name" value="Nonribosomal peptide synthetase 1"/>
    <property type="match status" value="1"/>
</dbReference>
<dbReference type="Gene3D" id="3.30.300.30">
    <property type="match status" value="3"/>
</dbReference>
<dbReference type="Gene3D" id="1.10.1200.10">
    <property type="entry name" value="ACP-like"/>
    <property type="match status" value="4"/>
</dbReference>
<dbReference type="Gene3D" id="3.30.559.10">
    <property type="entry name" value="Chloramphenicol acetyltransferase-like domain"/>
    <property type="match status" value="6"/>
</dbReference>
<dbReference type="Gene3D" id="3.40.50.12780">
    <property type="entry name" value="N-terminal domain of ligase-like"/>
    <property type="match status" value="3"/>
</dbReference>
<dbReference type="Gene3D" id="3.30.559.30">
    <property type="entry name" value="Nonribosomal peptide synthetase, condensation domain"/>
    <property type="match status" value="6"/>
</dbReference>
<dbReference type="InterPro" id="IPR010071">
    <property type="entry name" value="AA_adenyl_dom"/>
</dbReference>
<dbReference type="InterPro" id="IPR036736">
    <property type="entry name" value="ACP-like_sf"/>
</dbReference>
<dbReference type="InterPro" id="IPR045851">
    <property type="entry name" value="AMP-bd_C_sf"/>
</dbReference>
<dbReference type="InterPro" id="IPR020845">
    <property type="entry name" value="AMP-binding_CS"/>
</dbReference>
<dbReference type="InterPro" id="IPR000873">
    <property type="entry name" value="AMP-dep_synth/lig_dom"/>
</dbReference>
<dbReference type="InterPro" id="IPR042099">
    <property type="entry name" value="ANL_N_sf"/>
</dbReference>
<dbReference type="InterPro" id="IPR023213">
    <property type="entry name" value="CAT-like_dom_sf"/>
</dbReference>
<dbReference type="InterPro" id="IPR001242">
    <property type="entry name" value="Condensatn"/>
</dbReference>
<dbReference type="InterPro" id="IPR020806">
    <property type="entry name" value="PKS_PP-bd"/>
</dbReference>
<dbReference type="InterPro" id="IPR009081">
    <property type="entry name" value="PP-bd_ACP"/>
</dbReference>
<dbReference type="InterPro" id="IPR006162">
    <property type="entry name" value="Ppantetheine_attach_site"/>
</dbReference>
<dbReference type="NCBIfam" id="TIGR01733">
    <property type="entry name" value="AA-adenyl-dom"/>
    <property type="match status" value="3"/>
</dbReference>
<dbReference type="NCBIfam" id="NF003417">
    <property type="entry name" value="PRK04813.1"/>
    <property type="match status" value="3"/>
</dbReference>
<dbReference type="PANTHER" id="PTHR45527">
    <property type="entry name" value="NONRIBOSOMAL PEPTIDE SYNTHETASE"/>
    <property type="match status" value="1"/>
</dbReference>
<dbReference type="PANTHER" id="PTHR45527:SF12">
    <property type="entry name" value="NONRIBOSOMAL PEPTIDE SYNTHETASE IVOA"/>
    <property type="match status" value="1"/>
</dbReference>
<dbReference type="Pfam" id="PF00501">
    <property type="entry name" value="AMP-binding"/>
    <property type="match status" value="3"/>
</dbReference>
<dbReference type="Pfam" id="PF00668">
    <property type="entry name" value="Condensation"/>
    <property type="match status" value="6"/>
</dbReference>
<dbReference type="Pfam" id="PF00550">
    <property type="entry name" value="PP-binding"/>
    <property type="match status" value="4"/>
</dbReference>
<dbReference type="SMART" id="SM00823">
    <property type="entry name" value="PKS_PP"/>
    <property type="match status" value="4"/>
</dbReference>
<dbReference type="SMART" id="SM01294">
    <property type="entry name" value="PKS_PP_betabranch"/>
    <property type="match status" value="1"/>
</dbReference>
<dbReference type="SUPFAM" id="SSF56801">
    <property type="entry name" value="Acetyl-CoA synthetase-like"/>
    <property type="match status" value="3"/>
</dbReference>
<dbReference type="SUPFAM" id="SSF47336">
    <property type="entry name" value="ACP-like"/>
    <property type="match status" value="4"/>
</dbReference>
<dbReference type="SUPFAM" id="SSF52777">
    <property type="entry name" value="CoA-dependent acyltransferases"/>
    <property type="match status" value="12"/>
</dbReference>
<dbReference type="PROSITE" id="PS00455">
    <property type="entry name" value="AMP_BINDING"/>
    <property type="match status" value="3"/>
</dbReference>
<dbReference type="PROSITE" id="PS50075">
    <property type="entry name" value="CARRIER"/>
    <property type="match status" value="4"/>
</dbReference>
<dbReference type="PROSITE" id="PS00012">
    <property type="entry name" value="PHOSPHOPANTETHEINE"/>
    <property type="match status" value="1"/>
</dbReference>
<evidence type="ECO:0000250" key="1">
    <source>
        <dbReference type="UniProtKB" id="C8VPS9"/>
    </source>
</evidence>
<evidence type="ECO:0000255" key="2"/>
<evidence type="ECO:0000255" key="3">
    <source>
        <dbReference type="PROSITE-ProRule" id="PRU00258"/>
    </source>
</evidence>
<evidence type="ECO:0000256" key="4">
    <source>
        <dbReference type="SAM" id="MobiDB-lite"/>
    </source>
</evidence>
<evidence type="ECO:0000269" key="5">
    <source>
    </source>
</evidence>
<evidence type="ECO:0000269" key="6">
    <source>
    </source>
</evidence>
<evidence type="ECO:0000269" key="7">
    <source>
    </source>
</evidence>
<evidence type="ECO:0000269" key="8">
    <source>
    </source>
</evidence>
<evidence type="ECO:0000303" key="9">
    <source>
    </source>
</evidence>
<evidence type="ECO:0000305" key="10"/>
<evidence type="ECO:0000305" key="11">
    <source>
    </source>
</evidence>
<sequence length="4760" mass="527912">MKHLASSENMPTPAQDRAPSPSAMQQEIVDMCAQVLGRPITRMRTSKSFVALGGDSLLAIKLMAHCREAGYTISIAKILQTASIEELSRSAECQLISSSGEGPVPDPNRPGEPIATSLSLLNNELVLDQVRNITAEPLEDIQDIFPCSRTQEVFLISQHANPEMYQCVVVAEIKCMKPGLSLNDDRLQNAWICVAQRHPALRTVFIESIQRPGHFDQVIMKHEAVPLECQLSSAQCEESAEGMFSRRVSISKEKGTTGRATILRRSENSAVFRLEVSHALMDGQSFGIIFHDFAQAYLQNELPSPTAFSYDSFVAYQEEIDRESVRAYWSSHLAGAQPTRFPTNGNRKLEDLKTLRFRIELDAAALQKVCLEYDATSANLCQVAWAVVLGSYTGSKDVCFSYVNSGRHAPLSSIENAVGAFVDVMVCRMKLPETAKISQMLSKAKQDVIQGLSHPGSLLFEEKKHGHGVSDLRGNTIITFQMGVRDEESAGSDLQIVMLDEITASDYDISLNIQPCHGGLDIRLDYWLSRIDQEIIESVAESFQTALACMCSDDIPLRDVNVVCTQEIEQLRRRNSYTATEIGSLLHDKVDEQARLCPDALAVQGWDGELTYRALNEEASKLASYLQHLGAQQDILICTCFEKSKWAAISQLAVLKSGAAVVPLGTNQPMKRLEMMITNTGADIVLTTSNFASRFVTLFKHVVVIDGASMAKLPLAATVSCSATPDSLAYVIFTSGSTGVPKGVMLTHDSVSTSLRHSVERLNPGPDTRMLQFSAYTFDAAIYEFFFTWHIGACVCIVSEHDRINRLEPAMGELNVNWALLTPTMAEMISPGQVPSLKHLMLIGEAIKPGVLHRWIDHVELWNGYGPSECSIISSCKLLTRECNTTNIGFPITGAFWVVDATNPDRLAPTGAIGELLIQGSHLARGYLNDEQKTSQAFVPPPAWVSKYAFSGSTRYYRTGDLVQRNKDGSITFVGRRDTQVKLRGQRVEFEDIEQHLKDHDAVVEAAIVLAADGPCQGQLVAVVALEAFISQEMHPKTLSPVDQQQIARAKLQTAILGDWLSDRVPEYMVPTMWIPVTSRLLQTDSGKLDRVRLGRCVDSVDVSWVEAFASAGEELTQEREATTLQLQIRDIWAEILLLSIPQVPINRRSFLSLGGDSILAMKAVSRARTQGITLTVPDILQSKSIAKLTEKLGVPEENFLSYTSASKPFPLSPTQKWYFDRVHPLGSGIRHGYCRSVCLQANQKLAEKHVSTSFSTLVSMHPMLRARFLADAANGWQQQVVGHSDDAYGFAVSHLNGFEEIHDIAESTEQGLNIENGPVFSVQFMHLHAGKEEGKQLLFITGHHLVMDEISLCIIIEDLERLLYQDSTVALVVERPSFQAWVEGIAKTTKEEGPEPTSASLTPGLKPLMSKLDLEFGSLTSNEPVYDETNTKVLQFDEFDTMVLLGNANQALRTEPVELILAALVMSFTTTFPSQCIPVLLEGSRGRSLNHGSIDNSKTVGCFTTTMPLRFPVANMDDAVKSTKQIKNARRNTKFRRLHDSQNRNARNYETISSLNRETMEIFFNFDDSSQQIQEQSTLFKQQLLPRRQKLSTGVQKTRHSEIDVDATILQSRLHVAFHFNHRMNHGSDVERWSCEFPKTLRALVATLLKTPSMLTLSDFPLVELTDQKLKILEGQTLPRVGVQPENVEDMYPCTPMQNGILMSQARSPGMYQTQVVWQLQSPDSRINLDVERIMHAYQTLTDRHPMLRTIFVPRTSNAGDGAFDQIVIRRYRINVVHQVCEQDSVEALLATMTNPSAVDYGDGPNHKFMVYSTPSNLTYGHLVINHALSDGFSLSLLEKELTEAYEGTLTPDSKAPPYSAYLSFLKQRSTKEALQYWINNLESAEACFLPAMVERKIQNESETDIVSLPAPSRRQSTTASLEGVESLRKFSEKHSVTMANVFQLAWALVLSKFVRSDDVLFGYVSSGRDVPVHEAHQIFGPFVNILVSRIKLDWDSSIAESLQSVQKRFFENLGQQRTPLVDIWHALKTGGRGLFNTYLSYRQLSSADGQRSGLFQHTIAILGDSEYDAGVDIVASSNKVSVTLDYLPSFMGHDAATRIVDCLLQTVQSLTQSEAFLLRNVTTTTGQDIRQICQWNSEVPLVTVQHCVHDTVYSKCCLDPSAKAICAWDGDLTYFELDQLGEQLAFYLTSNLSVTPETMIGVCFDKSRWAIVAQLAILKSGGAIVPINPMEPMQRLETILRESGICTLLTTSCYGDRFLEIIPNVVAVDSNSPFFHGAMPTERVHSTANPDNAAVVIHTSGSTGNPKGVVLTHRSIASSLEAQGKIFGLSSRTRTLQFVSYTFDLSIGDIWGTLSHGGCVCVMSEDDRMNNIQGAIQIYGATLVIMTPTVATLLDVSKLPSLETLVLGGEALKPAFVEKHLEARQIKIFNGYGPSECSMITTCNGPIQHKNEAPKIGRPLLGSVWLVDDTDKICPIGAVGEIWVEGPLVARGYLNKKDLTDKGFPVDPPWAASAGLQGKRFYRTGDMARQNAKGDLFYVDRKDWQIKIRGNRVELSEIEHAIKEILSGLQNVAACLVSSNQRGPLIAAVLEQNCDTLGLQADVAGFHFERLSPGFQKELVLLKKALAGVLPSHMIPNLYVPTTRLPLTASGKVNRQALRQSLESFSEQEALHYTLADAAKTLPSSETEKTVRALWAAVLQHELDQVGVEDNFFHLGGDSYLAMRLVASSQADDSRVHFTVSDVLQHPTIRELAHAIDQRSTHSRASDRETARFSLWKEYQELNKSQESGHAKALLDQIAAQCDVPIDDVEDIYPCTPLQEGLMVVTAQQPRAYIARWAFQMPDNINLERFQGAWQTLSRAVPILRTRIVPGRLSGALQVVVRGDCKWHTSHDLDQYLSDDVAQSMAYGTSLIRLAYINHSNGCRDFVWTAHHSIYDGWSLPMLLEALSRIYLFNEVPESFPPYSNFIQYIQAQDLAEATAFWRSELQGNLGEPFPALPKPSYQPEPARIIRCTINVESVNRLVTLASLLRAAWAATVSSHTGGTALFAMPLSGRNAPVKGILDMMAPTVTTVPVRIQVDEKQAVHDYLAAVQQQASNMVPFEHSGLHHVRSMVGRDINPQHLFAIQSAPPGKATFEELLGMKELTLPMDGFDNYALIVECFINSREGASIEILARFDDNVLSHTQVQHLLSRFKHIFGQLSQVSAGNNDNTSSMLMGGLEYISPEEVAQLAILNREVAADAPCLVHDLVLRYSATTPDRPAVCAWDGEMSFQQLDQLSEALANRLVELGVTIESPVMICCDKSKWAVVGILAILRAGGTVVPVRAAPVARLQAIMEATGSRVVVTMSEFISQLQGIADHVVSMDSVPVTKPEIPQGPVKQHPSTKSVSFIMFTSGSTGSPKGIVLEHGSMSIAIQSHVKRFGVNRHTRGFQFASFTFDMSLHDILTPLAGGGCVCLPSEVERVNNLAHAMRRFRVNYSMLTPRVLHTIKPSECPEIRTLLVGGERCDTEQLKLWLPQAKVWHVYGPVECSIISTAAEFTGSDTLSLGLALVGAVWVTNKDNCNQLCPIGAVGELLVEGPLVARGYLRDEAKTSAVFIDYPPWRKQHGLAPNSQSQRMYRTGDLVVQHEDGSLIFVGRADQQLKIRGQRVEVGDIEHHIGLQPEVEDGVVLYPQNGPCRSQLIGLVTLHEHMSATDLSEVQPSSADDLAKAITQTEIIRSRLSDVLPDYMVPNVWISMACLPQSAHHKVDRRKLMDWVQSLDAEYFRRITGAKQEAPEKPTTRTEELMQSVLADVLGLSPEDVSMGRSFLSMGGDSITSMQVVSQCRSRYGLSLHVRDILQSKSITQLAQRATTDAAIAPLLPASDGEFRLSPIQRLFFRSFAARGLQSEDEFRFNQSVCLTVNKHIDTEQIKHAARGVVSAHPMLRARFTVSGKRWRQRIEDDVDASCHVVFHQVENQAELEDVIWAGQRSLSVEQGRVFSVHCIETTTTGSQLLFLVAHHLVVDIVSWQIILRDLDNLIQHPKLTAPVESTTFQHWLQLQASRAQNVGSPHQLVHAQMPIADWSYWGVTPENNTYGHRINEQFILEDCASVLFGDKQPLRSEPVEVLLAALFHSFHQIFPDRAVPTVFNEGHGREPWSDAIDLSNTVGWFTTMTPIHVPVGTSDVVDVLKRTKDLRRSIPERGFAYFTSRFLTRDGQHAFASHDQPEVMFNFGGRYRDDKHSRSLFRMSNEFNSSHISGIGNNVKRIAVFEVEASIQQENLAVTLGFSKNMQNPERITRWIQAYQDSLKTLLCQLSTLPTFLSLADVPLLNITYDDLDRLQSERLPLVGINDIDCIEDIYPCSPAQESILRSQARDSSTFHVRSACEFRAREAVVNPEALIRAWQTVVARHAILRTVCVPPTCDGESFYQAVLKQYEPQVSTVRCETAEDVDEAFKDEGGLRYPKWKPEHQLTLCLTSTGQVFFRLLINHTLVDVSSLQLIMNEVTLAYEDGILDTAAPSFSKYIAFLQESSVSESMKYWTSRLAGAQPHCLPVSATVGDGQSRDNAHLEMSNLEPLWRFRDRYGITIANILQLAWAFVLAKHSGSRDVVFGYVANGRDAPVDGVSHMAGPLINVMVSRIWLGDKQRSVAKTAEQVQNDFMEAFRYQRVSLADIEQVTGLSERQMLHTVVSIVRDPGSRRSSDAGVSVHGQSATSLAEYDVSLNAACGEDAIKLSLEYSSRYPGSVSAKGLLDNLQKAVLDLAENGEASIEEMGLRC</sequence>
<comment type="function">
    <text evidence="8 11">Nonribosomal peptide synthetase; part of the gene cluster that mediates the biosynthesis of beauveriolides I and III, cyclodepsipeptides acting as inhibitors of the acyl-CoA:cholesterol acyltransferase (PubMed:31926180). The HR-PKS cm3B initiates the biosynthesis of beauveriolides by iteratively catalyzing the formation of the linear polyketide chain (Probable). The ATP-dependent acetyl-CoA ligase cm3D converts the polyketide carboxylic acid to a CoA thioester which id shuttled to the first T domain in the NRPS cm3A by the acetyltransferase cm3C (Probable). Cm3A contains 13 domains and assembles the polyketide chain, L-phenylalanine, L-alanine, and D-leucine (or D-allo-isoleucine) to form beauveriolide I (or beauveriolide III). The production of both beauveriolides I and III suggests the substrate adaptability of cm3B, using different amino acids as substrates (Probable).</text>
</comment>
<comment type="pathway">
    <text evidence="8">Secondary metabolite biosynthesis.</text>
</comment>
<comment type="domain">
    <text evidence="11">NRP synthetases are composed of discrete domains (adenylation (A), thiolation (T) or peptidyl carrier protein (PCP) and condensation (C) domains) which when grouped together are referred to as a single module. Each module is responsible for the recognition (via the A domain) and incorporation of a single amino acid into the growing peptide product. Thus, an NRP synthetase is generally composed of one or more modules and can terminate in a thioesterase domain (TE) that releases the newly synthesized peptide from the enzyme. Occasionally, epimerase (E) domains (responsible for L- to D-amino acid conversion) are present within the NRP synthetase. Cm3A has the following module architecture: T-C-A-T-C-C-A-T-C-A-T-C-C.</text>
</comment>
<comment type="biotechnology">
    <text evidence="5 6 7">Beauveriolides inhibit selectively the acyl-CoA:cholesterol acyl-transferases (ACATs), leading to blocking the synthesis of cholesteryl esters and decreasing the cholesterol concentration, which suggests that beauveriolides are promising as potential lead compounds for antiatherosclerotic agents (PubMed:14718664, PubMed:19336931). Moreover, this activity correlates with inhibitory activities of beauveriolides in the secretion of amyloid-beta-peptide, which suggests that beauveriolides may be an attractive new candidate for the treatment of Alzheimer's disease (PubMed:19396893).</text>
</comment>
<comment type="similarity">
    <text evidence="10">Belongs to the nrps family.</text>
</comment>
<name>CM3A_CORMM</name>
<keyword id="KW-0436">Ligase</keyword>
<keyword id="KW-0596">Phosphopantetheine</keyword>
<keyword id="KW-0597">Phosphoprotein</keyword>
<keyword id="KW-1185">Reference proteome</keyword>
<keyword id="KW-0677">Repeat</keyword>
<organism>
    <name type="scientific">Cordyceps militaris (strain CM01)</name>
    <name type="common">Caterpillar fungus</name>
    <dbReference type="NCBI Taxonomy" id="983644"/>
    <lineage>
        <taxon>Eukaryota</taxon>
        <taxon>Fungi</taxon>
        <taxon>Dikarya</taxon>
        <taxon>Ascomycota</taxon>
        <taxon>Pezizomycotina</taxon>
        <taxon>Sordariomycetes</taxon>
        <taxon>Hypocreomycetidae</taxon>
        <taxon>Hypocreales</taxon>
        <taxon>Cordycipitaceae</taxon>
        <taxon>Cordyceps</taxon>
    </lineage>
</organism>
<reference key="1">
    <citation type="journal article" date="2011" name="Genome Biol.">
        <title>Genome sequence of the insect pathogenic fungus Cordyceps militaris, a valued traditional Chinese medicine.</title>
        <authorList>
            <person name="Zheng P."/>
            <person name="Xia Y."/>
            <person name="Xiao G."/>
            <person name="Xiong C."/>
            <person name="Hu X."/>
            <person name="Zhang S."/>
            <person name="Zheng H."/>
            <person name="Huang Y."/>
            <person name="Zhou Y."/>
            <person name="Wang S."/>
            <person name="Zhao G.-P."/>
            <person name="Liu X."/>
            <person name="St Leger R.J."/>
            <person name="Wang C."/>
        </authorList>
    </citation>
    <scope>NUCLEOTIDE SEQUENCE [LARGE SCALE GENOMIC DNA]</scope>
    <source>
        <strain>CM01</strain>
    </source>
</reference>
<reference key="2">
    <citation type="journal article" date="2004" name="Proc. Natl. Acad. Sci. U.S.A.">
        <title>Antiatherogenic activity of fungal beauveriolides, inhibitors of lipid droplet accumulation in macrophages.</title>
        <authorList>
            <person name="Namatame I."/>
            <person name="Tomoda H."/>
            <person name="Ishibashi S."/>
            <person name="Omura S."/>
        </authorList>
    </citation>
    <scope>BIOTECHNOLOGY</scope>
</reference>
<reference key="3">
    <citation type="journal article" date="2009" name="ChemBioChem">
        <title>The natural products beauveriolide I and III: a new class of beta-amyloid-lowering compounds.</title>
        <authorList>
            <person name="Witter D.P."/>
            <person name="Chen Y."/>
            <person name="Rogel J.K."/>
            <person name="Boldt G.E."/>
            <person name="Wentworth P. Jr."/>
        </authorList>
    </citation>
    <scope>BIOTECHNOLOGY</scope>
</reference>
<reference key="4">
    <citation type="journal article" date="2009" name="Chem. Pharm. Bull.">
        <title>The selectivity of beauveriolide derivatives in inhibition toward the two isozymes of acyl-CoA: cholesterol acyltransferase.</title>
        <authorList>
            <person name="Ohshiro T."/>
            <person name="Matsuda D."/>
            <person name="Nagai K."/>
            <person name="Doi T."/>
            <person name="Sunazuka T."/>
            <person name="Takahashi T."/>
            <person name="Rudel L.L."/>
            <person name="Omura S."/>
            <person name="Tomoda H."/>
        </authorList>
    </citation>
    <scope>BIOTECHNOLOGY</scope>
</reference>
<reference key="5">
    <citation type="journal article" date="2020" name="J. Biotechnol.">
        <title>Genome mining and biosynthesis of the Acyl-CoA:cholesterol acyltransferase inhibitor beauveriolide I and III in Cordyceps militaris.</title>
        <authorList>
            <person name="Wang X."/>
            <person name="Gao Y.L."/>
            <person name="Zhang M.L."/>
            <person name="Zhang H.D."/>
            <person name="Huang J.Z."/>
            <person name="Li L."/>
        </authorList>
    </citation>
    <scope>FUNCTION</scope>
    <scope>DOMAIN</scope>
    <scope>PATHWAY</scope>
</reference>
<feature type="chain" id="PRO_0000449816" description="Nonribosomal peptide synthetase cm3A">
    <location>
        <begin position="1"/>
        <end position="4760"/>
    </location>
</feature>
<feature type="domain" description="Carrier 1" evidence="3">
    <location>
        <begin position="19"/>
        <end position="95"/>
    </location>
</feature>
<feature type="domain" description="Carrier 2" evidence="3">
    <location>
        <begin position="1120"/>
        <end position="1197"/>
    </location>
</feature>
<feature type="domain" description="Carrier 3" evidence="3">
    <location>
        <begin position="2684"/>
        <end position="2762"/>
    </location>
</feature>
<feature type="domain" description="Carrier 4" evidence="3">
    <location>
        <begin position="3783"/>
        <end position="3857"/>
    </location>
</feature>
<feature type="region of interest" description="Disordered" evidence="4">
    <location>
        <begin position="1"/>
        <end position="24"/>
    </location>
</feature>
<feature type="region of interest" description="Condensation 1" evidence="2 11">
    <location>
        <begin position="142"/>
        <end position="570"/>
    </location>
</feature>
<feature type="region of interest" description="Condensation 1" evidence="1 2">
    <location>
        <begin position="178"/>
        <end position="571"/>
    </location>
</feature>
<feature type="region of interest" description="Adenylation 1" evidence="2 11">
    <location>
        <begin position="591"/>
        <end position="984"/>
    </location>
</feature>
<feature type="region of interest" description="Condensation 2" evidence="2 11">
    <location>
        <begin position="1210"/>
        <end position="1654"/>
    </location>
</feature>
<feature type="region of interest" description="Condensation 3" evidence="2 11">
    <location>
        <begin position="1689"/>
        <end position="2125"/>
    </location>
</feature>
<feature type="region of interest" description="Adenylation 2" evidence="2 11">
    <location>
        <begin position="2171"/>
        <end position="2551"/>
    </location>
</feature>
<feature type="region of interest" description="Condensation 4" evidence="2 11">
    <location>
        <begin position="2811"/>
        <end position="3203"/>
    </location>
</feature>
<feature type="region of interest" description="Adenylation 3" evidence="2 11">
    <location>
        <begin position="3255"/>
        <end position="3647"/>
    </location>
</feature>
<feature type="region of interest" description="Condensation 5" evidence="2 11">
    <location>
        <begin position="3869"/>
        <end position="4296"/>
    </location>
</feature>
<feature type="region of interest" description="Condensation 6" evidence="2 11">
    <location>
        <begin position="4340"/>
        <end position="4757"/>
    </location>
</feature>
<feature type="compositionally biased region" description="Polar residues" evidence="4">
    <location>
        <begin position="1"/>
        <end position="12"/>
    </location>
</feature>
<feature type="modified residue" description="O-(pantetheine 4'-phosphoryl)serine" evidence="3">
    <location>
        <position position="56"/>
    </location>
</feature>
<feature type="modified residue" description="O-(pantetheine 4'-phosphoryl)serine" evidence="3">
    <location>
        <position position="1158"/>
    </location>
</feature>
<feature type="modified residue" description="O-(pantetheine 4'-phosphoryl)serine" evidence="3">
    <location>
        <position position="2721"/>
    </location>
</feature>